<name>RS13_STAMF</name>
<keyword id="KW-1185">Reference proteome</keyword>
<keyword id="KW-0687">Ribonucleoprotein</keyword>
<keyword id="KW-0689">Ribosomal protein</keyword>
<keyword id="KW-0694">RNA-binding</keyword>
<keyword id="KW-0699">rRNA-binding</keyword>
<dbReference type="EMBL" id="CP000575">
    <property type="protein sequence ID" value="ABN69913.1"/>
    <property type="molecule type" value="Genomic_DNA"/>
</dbReference>
<dbReference type="RefSeq" id="WP_011839104.1">
    <property type="nucleotide sequence ID" value="NC_009033.1"/>
</dbReference>
<dbReference type="SMR" id="A3DMQ3"/>
<dbReference type="STRING" id="399550.Smar_0812"/>
<dbReference type="GeneID" id="4906774"/>
<dbReference type="KEGG" id="smr:Smar_0812"/>
<dbReference type="eggNOG" id="arCOG01722">
    <property type="taxonomic scope" value="Archaea"/>
</dbReference>
<dbReference type="HOGENOM" id="CLU_103849_0_0_2"/>
<dbReference type="OrthoDB" id="372127at2157"/>
<dbReference type="Proteomes" id="UP000000254">
    <property type="component" value="Chromosome"/>
</dbReference>
<dbReference type="GO" id="GO:0005829">
    <property type="term" value="C:cytosol"/>
    <property type="evidence" value="ECO:0007669"/>
    <property type="project" value="TreeGrafter"/>
</dbReference>
<dbReference type="GO" id="GO:0015935">
    <property type="term" value="C:small ribosomal subunit"/>
    <property type="evidence" value="ECO:0007669"/>
    <property type="project" value="TreeGrafter"/>
</dbReference>
<dbReference type="GO" id="GO:0019843">
    <property type="term" value="F:rRNA binding"/>
    <property type="evidence" value="ECO:0007669"/>
    <property type="project" value="UniProtKB-UniRule"/>
</dbReference>
<dbReference type="GO" id="GO:0003735">
    <property type="term" value="F:structural constituent of ribosome"/>
    <property type="evidence" value="ECO:0007669"/>
    <property type="project" value="InterPro"/>
</dbReference>
<dbReference type="GO" id="GO:0006412">
    <property type="term" value="P:translation"/>
    <property type="evidence" value="ECO:0007669"/>
    <property type="project" value="UniProtKB-UniRule"/>
</dbReference>
<dbReference type="FunFam" id="1.10.8.50:FF:000001">
    <property type="entry name" value="30S ribosomal protein S13"/>
    <property type="match status" value="1"/>
</dbReference>
<dbReference type="FunFam" id="4.10.910.10:FF:000002">
    <property type="entry name" value="40S ribosomal protein S18"/>
    <property type="match status" value="1"/>
</dbReference>
<dbReference type="Gene3D" id="1.10.8.50">
    <property type="match status" value="1"/>
</dbReference>
<dbReference type="Gene3D" id="4.10.910.10">
    <property type="entry name" value="30s ribosomal protein s13, domain 2"/>
    <property type="match status" value="1"/>
</dbReference>
<dbReference type="HAMAP" id="MF_01315">
    <property type="entry name" value="Ribosomal_uS13"/>
    <property type="match status" value="1"/>
</dbReference>
<dbReference type="InterPro" id="IPR027437">
    <property type="entry name" value="Rbsml_uS13_C"/>
</dbReference>
<dbReference type="InterPro" id="IPR001892">
    <property type="entry name" value="Ribosomal_uS13"/>
</dbReference>
<dbReference type="InterPro" id="IPR010979">
    <property type="entry name" value="Ribosomal_uS13-like_H2TH"/>
</dbReference>
<dbReference type="InterPro" id="IPR019977">
    <property type="entry name" value="Ribosomal_uS13_archaeal"/>
</dbReference>
<dbReference type="InterPro" id="IPR018269">
    <property type="entry name" value="Ribosomal_uS13_CS"/>
</dbReference>
<dbReference type="NCBIfam" id="NF003140">
    <property type="entry name" value="PRK04053.1"/>
    <property type="match status" value="1"/>
</dbReference>
<dbReference type="NCBIfam" id="TIGR03629">
    <property type="entry name" value="uS13_arch"/>
    <property type="match status" value="1"/>
</dbReference>
<dbReference type="PANTHER" id="PTHR10871">
    <property type="entry name" value="30S RIBOSOMAL PROTEIN S13/40S RIBOSOMAL PROTEIN S18"/>
    <property type="match status" value="1"/>
</dbReference>
<dbReference type="PANTHER" id="PTHR10871:SF3">
    <property type="entry name" value="SMALL RIBOSOMAL SUBUNIT PROTEIN US13"/>
    <property type="match status" value="1"/>
</dbReference>
<dbReference type="Pfam" id="PF00416">
    <property type="entry name" value="Ribosomal_S13"/>
    <property type="match status" value="1"/>
</dbReference>
<dbReference type="PIRSF" id="PIRSF002134">
    <property type="entry name" value="Ribosomal_S13"/>
    <property type="match status" value="1"/>
</dbReference>
<dbReference type="SUPFAM" id="SSF46946">
    <property type="entry name" value="S13-like H2TH domain"/>
    <property type="match status" value="1"/>
</dbReference>
<dbReference type="PROSITE" id="PS00646">
    <property type="entry name" value="RIBOSOMAL_S13_1"/>
    <property type="match status" value="1"/>
</dbReference>
<dbReference type="PROSITE" id="PS50159">
    <property type="entry name" value="RIBOSOMAL_S13_2"/>
    <property type="match status" value="1"/>
</dbReference>
<protein>
    <recommendedName>
        <fullName evidence="1">Small ribosomal subunit protein uS13</fullName>
    </recommendedName>
    <alternativeName>
        <fullName evidence="2">30S ribosomal protein S13</fullName>
    </alternativeName>
</protein>
<accession>A3DMQ3</accession>
<reference key="1">
    <citation type="journal article" date="2009" name="BMC Genomics">
        <title>The complete genome sequence of Staphylothermus marinus reveals differences in sulfur metabolism among heterotrophic Crenarchaeota.</title>
        <authorList>
            <person name="Anderson I.J."/>
            <person name="Dharmarajan L."/>
            <person name="Rodriguez J."/>
            <person name="Hooper S."/>
            <person name="Porat I."/>
            <person name="Ulrich L.E."/>
            <person name="Elkins J.G."/>
            <person name="Mavromatis K."/>
            <person name="Sun H."/>
            <person name="Land M."/>
            <person name="Lapidus A."/>
            <person name="Lucas S."/>
            <person name="Barry K."/>
            <person name="Huber H."/>
            <person name="Zhulin I.B."/>
            <person name="Whitman W.B."/>
            <person name="Mukhopadhyay B."/>
            <person name="Woese C."/>
            <person name="Bristow J."/>
            <person name="Kyrpides N."/>
        </authorList>
    </citation>
    <scope>NUCLEOTIDE SEQUENCE [LARGE SCALE GENOMIC DNA]</scope>
    <source>
        <strain>ATCC 43588 / DSM 3639 / JCM 9404 / F1</strain>
    </source>
</reference>
<reference key="2">
    <citation type="journal article" date="2009" name="Stand. Genomic Sci.">
        <title>Complete genome sequence of Staphylothermus marinus Stetter and Fiala 1986 type strain F1.</title>
        <authorList>
            <person name="Anderson I.J."/>
            <person name="Sun H."/>
            <person name="Lapidus A."/>
            <person name="Copeland A."/>
            <person name="Glavina Del Rio T."/>
            <person name="Tice H."/>
            <person name="Dalin E."/>
            <person name="Lucas S."/>
            <person name="Barry K."/>
            <person name="Land M."/>
            <person name="Richardson P."/>
            <person name="Huber H."/>
            <person name="Kyrpides N.C."/>
        </authorList>
    </citation>
    <scope>NUCLEOTIDE SEQUENCE [LARGE SCALE GENOMIC DNA]</scope>
    <source>
        <strain>ATCC 43588 / DSM 3639 / JCM 9404 / F1</strain>
    </source>
</reference>
<evidence type="ECO:0000255" key="1">
    <source>
        <dbReference type="HAMAP-Rule" id="MF_01315"/>
    </source>
</evidence>
<evidence type="ECO:0000305" key="2"/>
<proteinExistence type="inferred from homology"/>
<sequence>MSSARNYRYIVRIAGTDIDGSLKTVYGLAEIKGVGVNLAYGICRRLGIDPEMRIGYLTDEEIKRIEDLLSNPSAYDIPSWMLNRRKDYVTGKDMHLIGAELIFYVKQDIEREKKIKSWRGIRHALGLKVRGQRTRTTGRLGLTVGVRKKRR</sequence>
<organism>
    <name type="scientific">Staphylothermus marinus (strain ATCC 43588 / DSM 3639 / JCM 9404 / F1)</name>
    <dbReference type="NCBI Taxonomy" id="399550"/>
    <lineage>
        <taxon>Archaea</taxon>
        <taxon>Thermoproteota</taxon>
        <taxon>Thermoprotei</taxon>
        <taxon>Desulfurococcales</taxon>
        <taxon>Desulfurococcaceae</taxon>
        <taxon>Staphylothermus</taxon>
    </lineage>
</organism>
<feature type="chain" id="PRO_0000306766" description="Small ribosomal subunit protein uS13">
    <location>
        <begin position="1"/>
        <end position="151"/>
    </location>
</feature>
<gene>
    <name evidence="1" type="primary">rps13</name>
    <name type="ordered locus">Smar_0812</name>
</gene>
<comment type="function">
    <text evidence="1">Located at the top of the head of the 30S subunit, it contacts several helices of the 16S rRNA. In the 70S ribosome it contacts the 23S rRNA (bridge B1a) and protein L5 of the 50S subunit (bridge B1b), connecting the 2 subunits; these bridges are implicated in subunit movement.</text>
</comment>
<comment type="subunit">
    <text evidence="1">Part of the 30S ribosomal subunit. Forms a loose heterodimer with protein S19. Forms two bridges to the 50S subunit in the 70S ribosome.</text>
</comment>
<comment type="similarity">
    <text evidence="1">Belongs to the universal ribosomal protein uS13 family.</text>
</comment>